<comment type="function">
    <text>May be involved in transcriptional regulation.</text>
</comment>
<comment type="subcellular location">
    <subcellularLocation>
        <location evidence="6">Nucleus</location>
    </subcellularLocation>
</comment>
<comment type="alternative products">
    <event type="alternative splicing"/>
    <isoform>
        <id>Q9UL58-1</id>
        <name>1</name>
        <sequence type="displayed"/>
    </isoform>
    <isoform>
        <id>Q9UL58-2</id>
        <name>2</name>
        <sequence type="described" ref="VSP_054156 VSP_054157"/>
    </isoform>
</comment>
<comment type="similarity">
    <text evidence="6">Belongs to the krueppel C2H2-type zinc-finger protein family.</text>
</comment>
<organism>
    <name type="scientific">Homo sapiens</name>
    <name type="common">Human</name>
    <dbReference type="NCBI Taxonomy" id="9606"/>
    <lineage>
        <taxon>Eukaryota</taxon>
        <taxon>Metazoa</taxon>
        <taxon>Chordata</taxon>
        <taxon>Craniata</taxon>
        <taxon>Vertebrata</taxon>
        <taxon>Euteleostomi</taxon>
        <taxon>Mammalia</taxon>
        <taxon>Eutheria</taxon>
        <taxon>Euarchontoglires</taxon>
        <taxon>Primates</taxon>
        <taxon>Haplorrhini</taxon>
        <taxon>Catarrhini</taxon>
        <taxon>Hominidae</taxon>
        <taxon>Homo</taxon>
    </lineage>
</organism>
<gene>
    <name type="primary">ZNF215</name>
    <name type="synonym">BAZ2</name>
    <name type="synonym">ZKSCAN11</name>
</gene>
<reference key="1">
    <citation type="journal article" date="2000" name="Am. J. Hum. Genet.">
        <title>Disruption of a novel imprinted zinc-finger gene, ZNF215, in Beckwith-Wiedemann syndrome.</title>
        <authorList>
            <person name="Alders M."/>
            <person name="Ryan A."/>
            <person name="Hodges M."/>
            <person name="Bliek J."/>
            <person name="Feinberg A.P."/>
            <person name="Privitera O."/>
            <person name="Westerveld A."/>
            <person name="Little P.F.R."/>
            <person name="Mannens M."/>
        </authorList>
    </citation>
    <scope>NUCLEOTIDE SEQUENCE [MRNA] (ISOFORM 1)</scope>
    <scope>VARIANT LEU-323</scope>
</reference>
<reference key="2">
    <citation type="journal article" date="2006" name="Nature">
        <title>Human chromosome 11 DNA sequence and analysis including novel gene identification.</title>
        <authorList>
            <person name="Taylor T.D."/>
            <person name="Noguchi H."/>
            <person name="Totoki Y."/>
            <person name="Toyoda A."/>
            <person name="Kuroki Y."/>
            <person name="Dewar K."/>
            <person name="Lloyd C."/>
            <person name="Itoh T."/>
            <person name="Takeda T."/>
            <person name="Kim D.-W."/>
            <person name="She X."/>
            <person name="Barlow K.F."/>
            <person name="Bloom T."/>
            <person name="Bruford E."/>
            <person name="Chang J.L."/>
            <person name="Cuomo C.A."/>
            <person name="Eichler E."/>
            <person name="FitzGerald M.G."/>
            <person name="Jaffe D.B."/>
            <person name="LaButti K."/>
            <person name="Nicol R."/>
            <person name="Park H.-S."/>
            <person name="Seaman C."/>
            <person name="Sougnez C."/>
            <person name="Yang X."/>
            <person name="Zimmer A.R."/>
            <person name="Zody M.C."/>
            <person name="Birren B.W."/>
            <person name="Nusbaum C."/>
            <person name="Fujiyama A."/>
            <person name="Hattori M."/>
            <person name="Rogers J."/>
            <person name="Lander E.S."/>
            <person name="Sakaki Y."/>
        </authorList>
    </citation>
    <scope>NUCLEOTIDE SEQUENCE [LARGE SCALE GENOMIC DNA]</scope>
</reference>
<reference key="3">
    <citation type="journal article" date="2004" name="Genome Res.">
        <title>The status, quality, and expansion of the NIH full-length cDNA project: the Mammalian Gene Collection (MGC).</title>
        <authorList>
            <consortium name="The MGC Project Team"/>
        </authorList>
    </citation>
    <scope>NUCLEOTIDE SEQUENCE [LARGE SCALE MRNA] (ISOFORM 2)</scope>
    <source>
        <tissue>Kidney</tissue>
    </source>
</reference>
<name>ZN215_HUMAN</name>
<evidence type="ECO:0000255" key="1">
    <source>
        <dbReference type="PROSITE-ProRule" id="PRU00042"/>
    </source>
</evidence>
<evidence type="ECO:0000255" key="2">
    <source>
        <dbReference type="PROSITE-ProRule" id="PRU00119"/>
    </source>
</evidence>
<evidence type="ECO:0000255" key="3">
    <source>
        <dbReference type="PROSITE-ProRule" id="PRU00187"/>
    </source>
</evidence>
<evidence type="ECO:0000269" key="4">
    <source>
    </source>
</evidence>
<evidence type="ECO:0000303" key="5">
    <source>
    </source>
</evidence>
<evidence type="ECO:0000305" key="6"/>
<accession>Q9UL58</accession>
<accession>Q96C84</accession>
<sequence length="517" mass="60034">MQPLSKLMAISKPRNLSLREQREVLRADMSWQQETNPVVETHDSEASRQKFRHFQYLKVSGPHEALSQLWELCLQWLRPEIHTKKQIIELLVLEQFLAILPEEVRTWVNLQHPNNSKDMVTLIEDVIEMLEDEDMPCKDSALQMGSIKEKMKAGSRTGKPQEPVTFKDVVVEFSKEEWGQLDSAVKNLYRNVMLENFRNLNSLRKAHLLSKPFESLKLESKKKRWIMEKEIPRKTIFDMKSISGEESSHGVIMTRLTESGHPSSDAWKGENWLYRNQKKWDINLPQEAFIPETIYTEEEDFECSENKKSFDINSVSSICAIQVGIPSRKGSPKCDKFKTYFKFNLDSVGKQHSEYEYGNDLSLSTDIRHQKSHTTMNSYECYQCGKAFCRSSSLIRHQIIHTGEKPYKCSECGRFFNRRTNLTKHQKLHAEAKACTSNKCGKAFSKSEDSNNPTLHFGNNFYQCVNCGKSFNRSSSLIRHQMIHTGEKPFKCKECSKAFNRSSNLVKHQKLHTRDKS</sequence>
<keyword id="KW-0025">Alternative splicing</keyword>
<keyword id="KW-0238">DNA-binding</keyword>
<keyword id="KW-0479">Metal-binding</keyword>
<keyword id="KW-0539">Nucleus</keyword>
<keyword id="KW-1267">Proteomics identification</keyword>
<keyword id="KW-1185">Reference proteome</keyword>
<keyword id="KW-0677">Repeat</keyword>
<keyword id="KW-0804">Transcription</keyword>
<keyword id="KW-0805">Transcription regulation</keyword>
<keyword id="KW-0862">Zinc</keyword>
<keyword id="KW-0863">Zinc-finger</keyword>
<proteinExistence type="evidence at protein level"/>
<protein>
    <recommendedName>
        <fullName>Zinc finger protein 215</fullName>
    </recommendedName>
    <alternativeName>
        <fullName>BWSCR2-associated zinc finger protein 2</fullName>
        <shortName>BAZ-2</shortName>
    </alternativeName>
    <alternativeName>
        <fullName>Zinc finger protein with KRAB and SCAN domains 11</fullName>
    </alternativeName>
</protein>
<feature type="chain" id="PRO_0000047459" description="Zinc finger protein 215">
    <location>
        <begin position="1"/>
        <end position="517"/>
    </location>
</feature>
<feature type="domain" description="SCAN box" evidence="3">
    <location>
        <begin position="48"/>
        <end position="126"/>
    </location>
</feature>
<feature type="domain" description="KRAB" evidence="2">
    <location>
        <begin position="164"/>
        <end position="237"/>
    </location>
</feature>
<feature type="zinc finger region" description="C2H2-type 1" evidence="1">
    <location>
        <begin position="379"/>
        <end position="401"/>
    </location>
</feature>
<feature type="zinc finger region" description="C2H2-type 2" evidence="1">
    <location>
        <begin position="407"/>
        <end position="429"/>
    </location>
</feature>
<feature type="zinc finger region" description="C2H2-type 3" evidence="1">
    <location>
        <begin position="462"/>
        <end position="484"/>
    </location>
</feature>
<feature type="zinc finger region" description="C2H2-type 4" evidence="1">
    <location>
        <begin position="490"/>
        <end position="512"/>
    </location>
</feature>
<feature type="splice variant" id="VSP_054156" description="In isoform 2." evidence="5">
    <original>GENWLYRNQKKWDINLPQEAFIPETIYTEEEDFECS</original>
    <variation>DGVSLLLPRLEYNDAVSAHCNLHLWVQVILLPQPPE</variation>
    <location>
        <begin position="269"/>
        <end position="304"/>
    </location>
</feature>
<feature type="splice variant" id="VSP_054157" description="In isoform 2." evidence="5">
    <location>
        <begin position="305"/>
        <end position="517"/>
    </location>
</feature>
<feature type="sequence variant" id="VAR_057405" description="In dbSNP:rs11041107.">
    <original>N</original>
    <variation>S</variation>
    <location>
        <position position="36"/>
    </location>
</feature>
<feature type="sequence variant" id="VAR_057406" description="In dbSNP:rs35111903.">
    <original>V</original>
    <variation>I</variation>
    <location>
        <position position="38"/>
    </location>
</feature>
<feature type="sequence variant" id="VAR_024200" description="In dbSNP:rs11041108.">
    <original>M</original>
    <variation>V</variation>
    <location>
        <position position="119"/>
    </location>
</feature>
<feature type="sequence variant" id="VAR_057407" description="In dbSNP:rs11041115.">
    <original>S</original>
    <variation>F</variation>
    <location>
        <position position="263"/>
    </location>
</feature>
<feature type="sequence variant" id="VAR_060423" description="In dbSNP:rs2239730." evidence="4">
    <original>V</original>
    <variation>L</variation>
    <location>
        <position position="323"/>
    </location>
</feature>
<feature type="sequence variant" id="VAR_021890" description="In dbSNP:rs2239729.">
    <original>M</original>
    <variation>V</variation>
    <location>
        <position position="376"/>
    </location>
</feature>
<dbReference type="EMBL" id="AF056618">
    <property type="protein sequence ID" value="AAF00005.1"/>
    <property type="molecule type" value="mRNA"/>
</dbReference>
<dbReference type="EMBL" id="AC090160">
    <property type="status" value="NOT_ANNOTATED_CDS"/>
    <property type="molecule type" value="Genomic_DNA"/>
</dbReference>
<dbReference type="EMBL" id="AC100875">
    <property type="status" value="NOT_ANNOTATED_CDS"/>
    <property type="molecule type" value="Genomic_DNA"/>
</dbReference>
<dbReference type="EMBL" id="BC014538">
    <property type="protein sequence ID" value="AAH14538.1"/>
    <property type="molecule type" value="mRNA"/>
</dbReference>
<dbReference type="CCDS" id="CCDS7775.1">
    <molecule id="Q9UL58-1"/>
</dbReference>
<dbReference type="CCDS" id="CCDS86177.1">
    <molecule id="Q9UL58-2"/>
</dbReference>
<dbReference type="RefSeq" id="NP_001341782.1">
    <molecule id="Q9UL58-1"/>
    <property type="nucleotide sequence ID" value="NM_001354853.2"/>
</dbReference>
<dbReference type="RefSeq" id="NP_001341783.1">
    <molecule id="Q9UL58-2"/>
    <property type="nucleotide sequence ID" value="NM_001354854.1"/>
</dbReference>
<dbReference type="RefSeq" id="NP_037382.2">
    <molecule id="Q9UL58-1"/>
    <property type="nucleotide sequence ID" value="NM_013250.4"/>
</dbReference>
<dbReference type="RefSeq" id="XP_006718374.1">
    <property type="nucleotide sequence ID" value="XM_006718311.2"/>
</dbReference>
<dbReference type="RefSeq" id="XP_047283522.1">
    <molecule id="Q9UL58-1"/>
    <property type="nucleotide sequence ID" value="XM_047427566.1"/>
</dbReference>
<dbReference type="RefSeq" id="XP_047283523.1">
    <molecule id="Q9UL58-1"/>
    <property type="nucleotide sequence ID" value="XM_047427567.1"/>
</dbReference>
<dbReference type="RefSeq" id="XP_047283524.1">
    <molecule id="Q9UL58-1"/>
    <property type="nucleotide sequence ID" value="XM_047427568.1"/>
</dbReference>
<dbReference type="RefSeq" id="XP_047283525.1">
    <molecule id="Q9UL58-1"/>
    <property type="nucleotide sequence ID" value="XM_047427569.1"/>
</dbReference>
<dbReference type="RefSeq" id="XP_047283526.1">
    <molecule id="Q9UL58-1"/>
    <property type="nucleotide sequence ID" value="XM_047427570.1"/>
</dbReference>
<dbReference type="SMR" id="Q9UL58"/>
<dbReference type="BioGRID" id="113545">
    <property type="interactions" value="21"/>
</dbReference>
<dbReference type="FunCoup" id="Q9UL58">
    <property type="interactions" value="58"/>
</dbReference>
<dbReference type="IntAct" id="Q9UL58">
    <property type="interactions" value="29"/>
</dbReference>
<dbReference type="STRING" id="9606.ENSP00000278319"/>
<dbReference type="iPTMnet" id="Q9UL58"/>
<dbReference type="PhosphoSitePlus" id="Q9UL58"/>
<dbReference type="BioMuta" id="ZNF215"/>
<dbReference type="DMDM" id="296453039"/>
<dbReference type="jPOST" id="Q9UL58"/>
<dbReference type="MassIVE" id="Q9UL58"/>
<dbReference type="PaxDb" id="9606-ENSP00000278319"/>
<dbReference type="PeptideAtlas" id="Q9UL58"/>
<dbReference type="Antibodypedia" id="23972">
    <property type="antibodies" value="120 antibodies from 21 providers"/>
</dbReference>
<dbReference type="DNASU" id="7762"/>
<dbReference type="Ensembl" id="ENST00000278319.10">
    <molecule id="Q9UL58-1"/>
    <property type="protein sequence ID" value="ENSP00000278319.5"/>
    <property type="gene ID" value="ENSG00000149054.16"/>
</dbReference>
<dbReference type="Ensembl" id="ENST00000414517.6">
    <molecule id="Q9UL58-1"/>
    <property type="protein sequence ID" value="ENSP00000393202.2"/>
    <property type="gene ID" value="ENSG00000149054.16"/>
</dbReference>
<dbReference type="Ensembl" id="ENST00000529903.1">
    <molecule id="Q9UL58-2"/>
    <property type="protein sequence ID" value="ENSP00000432306.1"/>
    <property type="gene ID" value="ENSG00000149054.16"/>
</dbReference>
<dbReference type="Ensembl" id="ENST00000610573.4">
    <molecule id="Q9UL58-2"/>
    <property type="protein sequence ID" value="ENSP00000484674.1"/>
    <property type="gene ID" value="ENSG00000149054.16"/>
</dbReference>
<dbReference type="GeneID" id="7762"/>
<dbReference type="KEGG" id="hsa:7762"/>
<dbReference type="MANE-Select" id="ENST00000278319.10">
    <property type="protein sequence ID" value="ENSP00000278319.5"/>
    <property type="RefSeq nucleotide sequence ID" value="NM_013250.4"/>
    <property type="RefSeq protein sequence ID" value="NP_037382.2"/>
</dbReference>
<dbReference type="UCSC" id="uc001mey.4">
    <molecule id="Q9UL58-1"/>
    <property type="organism name" value="human"/>
</dbReference>
<dbReference type="AGR" id="HGNC:13007"/>
<dbReference type="CTD" id="7762"/>
<dbReference type="DisGeNET" id="7762"/>
<dbReference type="GeneCards" id="ZNF215"/>
<dbReference type="HGNC" id="HGNC:13007">
    <property type="gene designation" value="ZNF215"/>
</dbReference>
<dbReference type="HPA" id="ENSG00000149054">
    <property type="expression patterns" value="Tissue enhanced (lymphoid)"/>
</dbReference>
<dbReference type="MIM" id="605016">
    <property type="type" value="gene"/>
</dbReference>
<dbReference type="neXtProt" id="NX_Q9UL58"/>
<dbReference type="OpenTargets" id="ENSG00000149054"/>
<dbReference type="PharmGKB" id="PA37586"/>
<dbReference type="VEuPathDB" id="HostDB:ENSG00000149054"/>
<dbReference type="eggNOG" id="KOG1721">
    <property type="taxonomic scope" value="Eukaryota"/>
</dbReference>
<dbReference type="GeneTree" id="ENSGT00940000163217"/>
<dbReference type="HOGENOM" id="CLU_002678_49_8_1"/>
<dbReference type="InParanoid" id="Q9UL58"/>
<dbReference type="OMA" id="VSWQQET"/>
<dbReference type="OrthoDB" id="6077919at2759"/>
<dbReference type="PAN-GO" id="Q9UL58">
    <property type="GO annotations" value="3 GO annotations based on evolutionary models"/>
</dbReference>
<dbReference type="PhylomeDB" id="Q9UL58"/>
<dbReference type="TreeFam" id="TF350807"/>
<dbReference type="PathwayCommons" id="Q9UL58"/>
<dbReference type="Reactome" id="R-HSA-212436">
    <property type="pathway name" value="Generic Transcription Pathway"/>
</dbReference>
<dbReference type="SignaLink" id="Q9UL58"/>
<dbReference type="BioGRID-ORCS" id="7762">
    <property type="hits" value="6 hits in 1179 CRISPR screens"/>
</dbReference>
<dbReference type="GenomeRNAi" id="7762"/>
<dbReference type="Pharos" id="Q9UL58">
    <property type="development level" value="Tbio"/>
</dbReference>
<dbReference type="PRO" id="PR:Q9UL58"/>
<dbReference type="Proteomes" id="UP000005640">
    <property type="component" value="Chromosome 11"/>
</dbReference>
<dbReference type="RNAct" id="Q9UL58">
    <property type="molecule type" value="protein"/>
</dbReference>
<dbReference type="Bgee" id="ENSG00000149054">
    <property type="expression patterns" value="Expressed in secondary oocyte and 111 other cell types or tissues"/>
</dbReference>
<dbReference type="ExpressionAtlas" id="Q9UL58">
    <property type="expression patterns" value="baseline and differential"/>
</dbReference>
<dbReference type="GO" id="GO:0005634">
    <property type="term" value="C:nucleus"/>
    <property type="evidence" value="ECO:0007669"/>
    <property type="project" value="UniProtKB-SubCell"/>
</dbReference>
<dbReference type="GO" id="GO:0003700">
    <property type="term" value="F:DNA-binding transcription factor activity"/>
    <property type="evidence" value="ECO:0000303"/>
    <property type="project" value="UniProtKB"/>
</dbReference>
<dbReference type="GO" id="GO:0000981">
    <property type="term" value="F:DNA-binding transcription factor activity, RNA polymerase II-specific"/>
    <property type="evidence" value="ECO:0000318"/>
    <property type="project" value="GO_Central"/>
</dbReference>
<dbReference type="GO" id="GO:0000978">
    <property type="term" value="F:RNA polymerase II cis-regulatory region sequence-specific DNA binding"/>
    <property type="evidence" value="ECO:0000318"/>
    <property type="project" value="GO_Central"/>
</dbReference>
<dbReference type="GO" id="GO:0008270">
    <property type="term" value="F:zinc ion binding"/>
    <property type="evidence" value="ECO:0007669"/>
    <property type="project" value="UniProtKB-KW"/>
</dbReference>
<dbReference type="GO" id="GO:0006357">
    <property type="term" value="P:regulation of transcription by RNA polymerase II"/>
    <property type="evidence" value="ECO:0000318"/>
    <property type="project" value="GO_Central"/>
</dbReference>
<dbReference type="CDD" id="cd07765">
    <property type="entry name" value="KRAB_A-box"/>
    <property type="match status" value="1"/>
</dbReference>
<dbReference type="CDD" id="cd07936">
    <property type="entry name" value="SCAN"/>
    <property type="match status" value="1"/>
</dbReference>
<dbReference type="FunFam" id="1.10.4020.10:FF:000001">
    <property type="entry name" value="zinc finger protein 263 isoform X1"/>
    <property type="match status" value="1"/>
</dbReference>
<dbReference type="FunFam" id="3.30.160.60:FF:000690">
    <property type="entry name" value="Zinc finger protein 354C"/>
    <property type="match status" value="1"/>
</dbReference>
<dbReference type="FunFam" id="3.30.160.60:FF:001865">
    <property type="entry name" value="Zinc finger protein 404"/>
    <property type="match status" value="1"/>
</dbReference>
<dbReference type="FunFam" id="3.30.160.60:FF:000496">
    <property type="entry name" value="Zinc finger with KRAB and SCAN domains 1"/>
    <property type="match status" value="2"/>
</dbReference>
<dbReference type="Gene3D" id="6.10.140.140">
    <property type="match status" value="1"/>
</dbReference>
<dbReference type="Gene3D" id="3.30.160.60">
    <property type="entry name" value="Classic Zinc Finger"/>
    <property type="match status" value="4"/>
</dbReference>
<dbReference type="Gene3D" id="1.10.4020.10">
    <property type="entry name" value="DNA breaking-rejoining enzymes"/>
    <property type="match status" value="1"/>
</dbReference>
<dbReference type="InterPro" id="IPR050752">
    <property type="entry name" value="C2H2-ZF_domain"/>
</dbReference>
<dbReference type="InterPro" id="IPR001909">
    <property type="entry name" value="KRAB"/>
</dbReference>
<dbReference type="InterPro" id="IPR036051">
    <property type="entry name" value="KRAB_dom_sf"/>
</dbReference>
<dbReference type="InterPro" id="IPR003309">
    <property type="entry name" value="SCAN_dom"/>
</dbReference>
<dbReference type="InterPro" id="IPR038269">
    <property type="entry name" value="SCAN_sf"/>
</dbReference>
<dbReference type="InterPro" id="IPR036236">
    <property type="entry name" value="Znf_C2H2_sf"/>
</dbReference>
<dbReference type="InterPro" id="IPR013087">
    <property type="entry name" value="Znf_C2H2_type"/>
</dbReference>
<dbReference type="PANTHER" id="PTHR24384">
    <property type="entry name" value="FINGER PUTATIVE TRANSCRIPTION FACTOR FAMILY-RELATED"/>
    <property type="match status" value="1"/>
</dbReference>
<dbReference type="PANTHER" id="PTHR24384:SF246">
    <property type="entry name" value="GENE, 19965-RELATED"/>
    <property type="match status" value="1"/>
</dbReference>
<dbReference type="Pfam" id="PF01352">
    <property type="entry name" value="KRAB"/>
    <property type="match status" value="1"/>
</dbReference>
<dbReference type="Pfam" id="PF02023">
    <property type="entry name" value="SCAN"/>
    <property type="match status" value="1"/>
</dbReference>
<dbReference type="Pfam" id="PF00096">
    <property type="entry name" value="zf-C2H2"/>
    <property type="match status" value="4"/>
</dbReference>
<dbReference type="SMART" id="SM00349">
    <property type="entry name" value="KRAB"/>
    <property type="match status" value="1"/>
</dbReference>
<dbReference type="SMART" id="SM00431">
    <property type="entry name" value="SCAN"/>
    <property type="match status" value="1"/>
</dbReference>
<dbReference type="SMART" id="SM00355">
    <property type="entry name" value="ZnF_C2H2"/>
    <property type="match status" value="4"/>
</dbReference>
<dbReference type="SUPFAM" id="SSF57667">
    <property type="entry name" value="beta-beta-alpha zinc fingers"/>
    <property type="match status" value="3"/>
</dbReference>
<dbReference type="SUPFAM" id="SSF109640">
    <property type="entry name" value="KRAB domain (Kruppel-associated box)"/>
    <property type="match status" value="1"/>
</dbReference>
<dbReference type="SUPFAM" id="SSF47353">
    <property type="entry name" value="Retrovirus capsid dimerization domain-like"/>
    <property type="match status" value="1"/>
</dbReference>
<dbReference type="PROSITE" id="PS50805">
    <property type="entry name" value="KRAB"/>
    <property type="match status" value="1"/>
</dbReference>
<dbReference type="PROSITE" id="PS50804">
    <property type="entry name" value="SCAN_BOX"/>
    <property type="match status" value="1"/>
</dbReference>
<dbReference type="PROSITE" id="PS00028">
    <property type="entry name" value="ZINC_FINGER_C2H2_1"/>
    <property type="match status" value="4"/>
</dbReference>
<dbReference type="PROSITE" id="PS50157">
    <property type="entry name" value="ZINC_FINGER_C2H2_2"/>
    <property type="match status" value="4"/>
</dbReference>